<dbReference type="EC" id="2.7.4.22" evidence="1"/>
<dbReference type="EMBL" id="CP000848">
    <property type="protein sequence ID" value="ABV75806.1"/>
    <property type="molecule type" value="Genomic_DNA"/>
</dbReference>
<dbReference type="RefSeq" id="WP_012150413.1">
    <property type="nucleotide sequence ID" value="NZ_CP121767.1"/>
</dbReference>
<dbReference type="SMR" id="A8GQY1"/>
<dbReference type="GeneID" id="79936989"/>
<dbReference type="KEGG" id="rri:A1G_01120"/>
<dbReference type="HOGENOM" id="CLU_033861_0_0_5"/>
<dbReference type="UniPathway" id="UPA00159">
    <property type="reaction ID" value="UER00275"/>
</dbReference>
<dbReference type="Proteomes" id="UP000006832">
    <property type="component" value="Chromosome"/>
</dbReference>
<dbReference type="GO" id="GO:0005829">
    <property type="term" value="C:cytosol"/>
    <property type="evidence" value="ECO:0007669"/>
    <property type="project" value="TreeGrafter"/>
</dbReference>
<dbReference type="GO" id="GO:0005524">
    <property type="term" value="F:ATP binding"/>
    <property type="evidence" value="ECO:0007669"/>
    <property type="project" value="UniProtKB-KW"/>
</dbReference>
<dbReference type="GO" id="GO:0033862">
    <property type="term" value="F:UMP kinase activity"/>
    <property type="evidence" value="ECO:0007669"/>
    <property type="project" value="UniProtKB-EC"/>
</dbReference>
<dbReference type="GO" id="GO:0044210">
    <property type="term" value="P:'de novo' CTP biosynthetic process"/>
    <property type="evidence" value="ECO:0007669"/>
    <property type="project" value="UniProtKB-UniRule"/>
</dbReference>
<dbReference type="GO" id="GO:0006225">
    <property type="term" value="P:UDP biosynthetic process"/>
    <property type="evidence" value="ECO:0007669"/>
    <property type="project" value="TreeGrafter"/>
</dbReference>
<dbReference type="CDD" id="cd04254">
    <property type="entry name" value="AAK_UMPK-PyrH-Ec"/>
    <property type="match status" value="1"/>
</dbReference>
<dbReference type="FunFam" id="3.40.1160.10:FF:000001">
    <property type="entry name" value="Uridylate kinase"/>
    <property type="match status" value="1"/>
</dbReference>
<dbReference type="Gene3D" id="3.40.1160.10">
    <property type="entry name" value="Acetylglutamate kinase-like"/>
    <property type="match status" value="1"/>
</dbReference>
<dbReference type="HAMAP" id="MF_01220_B">
    <property type="entry name" value="PyrH_B"/>
    <property type="match status" value="1"/>
</dbReference>
<dbReference type="InterPro" id="IPR036393">
    <property type="entry name" value="AceGlu_kinase-like_sf"/>
</dbReference>
<dbReference type="InterPro" id="IPR001048">
    <property type="entry name" value="Asp/Glu/Uridylate_kinase"/>
</dbReference>
<dbReference type="InterPro" id="IPR011817">
    <property type="entry name" value="Uridylate_kinase"/>
</dbReference>
<dbReference type="InterPro" id="IPR015963">
    <property type="entry name" value="Uridylate_kinase_bac"/>
</dbReference>
<dbReference type="NCBIfam" id="TIGR02075">
    <property type="entry name" value="pyrH_bact"/>
    <property type="match status" value="1"/>
</dbReference>
<dbReference type="PANTHER" id="PTHR42833">
    <property type="entry name" value="URIDYLATE KINASE"/>
    <property type="match status" value="1"/>
</dbReference>
<dbReference type="PANTHER" id="PTHR42833:SF4">
    <property type="entry name" value="URIDYLATE KINASE PUMPKIN, CHLOROPLASTIC"/>
    <property type="match status" value="1"/>
</dbReference>
<dbReference type="Pfam" id="PF00696">
    <property type="entry name" value="AA_kinase"/>
    <property type="match status" value="1"/>
</dbReference>
<dbReference type="PIRSF" id="PIRSF005650">
    <property type="entry name" value="Uridylate_kin"/>
    <property type="match status" value="1"/>
</dbReference>
<dbReference type="SUPFAM" id="SSF53633">
    <property type="entry name" value="Carbamate kinase-like"/>
    <property type="match status" value="1"/>
</dbReference>
<evidence type="ECO:0000255" key="1">
    <source>
        <dbReference type="HAMAP-Rule" id="MF_01220"/>
    </source>
</evidence>
<protein>
    <recommendedName>
        <fullName evidence="1">Uridylate kinase</fullName>
        <shortName evidence="1">UK</shortName>
        <ecNumber evidence="1">2.7.4.22</ecNumber>
    </recommendedName>
    <alternativeName>
        <fullName evidence="1">Uridine monophosphate kinase</fullName>
        <shortName evidence="1">UMP kinase</shortName>
        <shortName evidence="1">UMPK</shortName>
    </alternativeName>
</protein>
<feature type="chain" id="PRO_1000054000" description="Uridylate kinase">
    <location>
        <begin position="1"/>
        <end position="247"/>
    </location>
</feature>
<feature type="binding site" evidence="1">
    <location>
        <begin position="21"/>
        <end position="24"/>
    </location>
    <ligand>
        <name>ATP</name>
        <dbReference type="ChEBI" id="CHEBI:30616"/>
    </ligand>
</feature>
<feature type="binding site" evidence="1">
    <location>
        <position position="63"/>
    </location>
    <ligand>
        <name>UMP</name>
        <dbReference type="ChEBI" id="CHEBI:57865"/>
    </ligand>
</feature>
<feature type="binding site" evidence="1">
    <location>
        <position position="64"/>
    </location>
    <ligand>
        <name>ATP</name>
        <dbReference type="ChEBI" id="CHEBI:30616"/>
    </ligand>
</feature>
<feature type="binding site" evidence="1">
    <location>
        <position position="68"/>
    </location>
    <ligand>
        <name>ATP</name>
        <dbReference type="ChEBI" id="CHEBI:30616"/>
    </ligand>
</feature>
<feature type="binding site" evidence="1">
    <location>
        <position position="83"/>
    </location>
    <ligand>
        <name>UMP</name>
        <dbReference type="ChEBI" id="CHEBI:57865"/>
    </ligand>
</feature>
<feature type="binding site" evidence="1">
    <location>
        <begin position="144"/>
        <end position="151"/>
    </location>
    <ligand>
        <name>UMP</name>
        <dbReference type="ChEBI" id="CHEBI:57865"/>
    </ligand>
</feature>
<feature type="binding site" evidence="1">
    <location>
        <position position="171"/>
    </location>
    <ligand>
        <name>ATP</name>
        <dbReference type="ChEBI" id="CHEBI:30616"/>
    </ligand>
</feature>
<feature type="binding site" evidence="1">
    <location>
        <position position="172"/>
    </location>
    <ligand>
        <name>ATP</name>
        <dbReference type="ChEBI" id="CHEBI:30616"/>
    </ligand>
</feature>
<feature type="binding site" evidence="1">
    <location>
        <position position="177"/>
    </location>
    <ligand>
        <name>ATP</name>
        <dbReference type="ChEBI" id="CHEBI:30616"/>
    </ligand>
</feature>
<feature type="binding site" evidence="1">
    <location>
        <position position="180"/>
    </location>
    <ligand>
        <name>ATP</name>
        <dbReference type="ChEBI" id="CHEBI:30616"/>
    </ligand>
</feature>
<name>PYRH_RICRS</name>
<sequence>MISDINALKYKALKYKKVLLKVSGEALMGDKQFGHEYDIIKKIAIDIKEVIALGVEVAIVVGGGNIYRGINAALVGMDRASADYIGMLATVINALTLQNVMESLNIYTRVLSAIPMMSVCEPYIRRKAKRHMEKKRVVIFAGGTGNPFCTTDSAAVLRAIEMNCDILLKATQVDGVYDSDPKKNPDAKKYFTISYKDVITNNLQVMDTAAIAVARENKLPIRVFSIKEQGNFARVIQDKGEYTAIEE</sequence>
<gene>
    <name evidence="1" type="primary">pyrH</name>
    <name type="ordered locus">A1G_01120</name>
</gene>
<accession>A8GQY1</accession>
<organism>
    <name type="scientific">Rickettsia rickettsii (strain Sheila Smith)</name>
    <dbReference type="NCBI Taxonomy" id="392021"/>
    <lineage>
        <taxon>Bacteria</taxon>
        <taxon>Pseudomonadati</taxon>
        <taxon>Pseudomonadota</taxon>
        <taxon>Alphaproteobacteria</taxon>
        <taxon>Rickettsiales</taxon>
        <taxon>Rickettsiaceae</taxon>
        <taxon>Rickettsieae</taxon>
        <taxon>Rickettsia</taxon>
        <taxon>spotted fever group</taxon>
    </lineage>
</organism>
<keyword id="KW-0067">ATP-binding</keyword>
<keyword id="KW-0963">Cytoplasm</keyword>
<keyword id="KW-0418">Kinase</keyword>
<keyword id="KW-0547">Nucleotide-binding</keyword>
<keyword id="KW-0665">Pyrimidine biosynthesis</keyword>
<keyword id="KW-0808">Transferase</keyword>
<proteinExistence type="inferred from homology"/>
<comment type="function">
    <text evidence="1">Catalyzes the reversible phosphorylation of UMP to UDP.</text>
</comment>
<comment type="catalytic activity">
    <reaction evidence="1">
        <text>UMP + ATP = UDP + ADP</text>
        <dbReference type="Rhea" id="RHEA:24400"/>
        <dbReference type="ChEBI" id="CHEBI:30616"/>
        <dbReference type="ChEBI" id="CHEBI:57865"/>
        <dbReference type="ChEBI" id="CHEBI:58223"/>
        <dbReference type="ChEBI" id="CHEBI:456216"/>
        <dbReference type="EC" id="2.7.4.22"/>
    </reaction>
</comment>
<comment type="activity regulation">
    <text evidence="1">Inhibited by UTP.</text>
</comment>
<comment type="pathway">
    <text evidence="1">Pyrimidine metabolism; CTP biosynthesis via de novo pathway; UDP from UMP (UMPK route): step 1/1.</text>
</comment>
<comment type="subunit">
    <text evidence="1">Homohexamer.</text>
</comment>
<comment type="subcellular location">
    <subcellularLocation>
        <location evidence="1">Cytoplasm</location>
    </subcellularLocation>
</comment>
<comment type="similarity">
    <text evidence="1">Belongs to the UMP kinase family.</text>
</comment>
<reference key="1">
    <citation type="submission" date="2007-09" db="EMBL/GenBank/DDBJ databases">
        <title>Complete genome sequence of Rickettsia rickettsii.</title>
        <authorList>
            <person name="Madan A."/>
            <person name="Fahey J."/>
            <person name="Helton E."/>
            <person name="Ketteman M."/>
            <person name="Madan A."/>
            <person name="Rodrigues S."/>
            <person name="Sanchez A."/>
            <person name="Dasch G."/>
            <person name="Eremeeva M."/>
        </authorList>
    </citation>
    <scope>NUCLEOTIDE SEQUENCE [LARGE SCALE GENOMIC DNA]</scope>
    <source>
        <strain>Sheila Smith</strain>
    </source>
</reference>